<gene>
    <name evidence="1" type="primary">groES</name>
    <name evidence="1" type="synonym">groS</name>
</gene>
<reference key="1">
    <citation type="journal article" date="1997" name="Microbiology">
        <title>Streptomyces lividans groES, groEL1 and groEL2 genes.</title>
        <authorList>
            <person name="de Leon P."/>
            <person name="Marco S."/>
            <person name="Isiegas C."/>
            <person name="Marina A."/>
            <person name="Carrascosa J.L."/>
            <person name="Mellado R.P."/>
        </authorList>
    </citation>
    <scope>NUCLEOTIDE SEQUENCE [GENOMIC DNA]</scope>
    <source>
        <strain>TK21</strain>
    </source>
</reference>
<feature type="chain" id="PRO_0000174862" description="Co-chaperonin GroES">
    <location>
        <begin position="1"/>
        <end position="102"/>
    </location>
</feature>
<proteinExistence type="inferred from homology"/>
<evidence type="ECO:0000255" key="1">
    <source>
        <dbReference type="HAMAP-Rule" id="MF_00580"/>
    </source>
</evidence>
<evidence type="ECO:0000305" key="2"/>
<accession>P0A346</accession>
<accession>P40172</accession>
<dbReference type="EMBL" id="X95970">
    <property type="protein sequence ID" value="CAA65224.1"/>
    <property type="molecule type" value="Genomic_DNA"/>
</dbReference>
<dbReference type="SMR" id="P0A346"/>
<dbReference type="GO" id="GO:0005737">
    <property type="term" value="C:cytoplasm"/>
    <property type="evidence" value="ECO:0007669"/>
    <property type="project" value="UniProtKB-SubCell"/>
</dbReference>
<dbReference type="GO" id="GO:0005524">
    <property type="term" value="F:ATP binding"/>
    <property type="evidence" value="ECO:0007669"/>
    <property type="project" value="InterPro"/>
</dbReference>
<dbReference type="GO" id="GO:0046872">
    <property type="term" value="F:metal ion binding"/>
    <property type="evidence" value="ECO:0007669"/>
    <property type="project" value="TreeGrafter"/>
</dbReference>
<dbReference type="GO" id="GO:0044183">
    <property type="term" value="F:protein folding chaperone"/>
    <property type="evidence" value="ECO:0007669"/>
    <property type="project" value="InterPro"/>
</dbReference>
<dbReference type="GO" id="GO:0051087">
    <property type="term" value="F:protein-folding chaperone binding"/>
    <property type="evidence" value="ECO:0007669"/>
    <property type="project" value="TreeGrafter"/>
</dbReference>
<dbReference type="GO" id="GO:0051082">
    <property type="term" value="F:unfolded protein binding"/>
    <property type="evidence" value="ECO:0007669"/>
    <property type="project" value="TreeGrafter"/>
</dbReference>
<dbReference type="GO" id="GO:0051085">
    <property type="term" value="P:chaperone cofactor-dependent protein refolding"/>
    <property type="evidence" value="ECO:0007669"/>
    <property type="project" value="TreeGrafter"/>
</dbReference>
<dbReference type="CDD" id="cd00320">
    <property type="entry name" value="cpn10"/>
    <property type="match status" value="1"/>
</dbReference>
<dbReference type="FunFam" id="2.30.33.40:FF:000001">
    <property type="entry name" value="10 kDa chaperonin"/>
    <property type="match status" value="1"/>
</dbReference>
<dbReference type="Gene3D" id="2.30.33.40">
    <property type="entry name" value="GroES chaperonin"/>
    <property type="match status" value="1"/>
</dbReference>
<dbReference type="HAMAP" id="MF_00580">
    <property type="entry name" value="CH10"/>
    <property type="match status" value="1"/>
</dbReference>
<dbReference type="InterPro" id="IPR020818">
    <property type="entry name" value="Chaperonin_GroES"/>
</dbReference>
<dbReference type="InterPro" id="IPR037124">
    <property type="entry name" value="Chaperonin_GroES_sf"/>
</dbReference>
<dbReference type="InterPro" id="IPR018369">
    <property type="entry name" value="Chaprnonin_Cpn10_CS"/>
</dbReference>
<dbReference type="InterPro" id="IPR011032">
    <property type="entry name" value="GroES-like_sf"/>
</dbReference>
<dbReference type="NCBIfam" id="NF001530">
    <property type="entry name" value="PRK00364.1-6"/>
    <property type="match status" value="1"/>
</dbReference>
<dbReference type="NCBIfam" id="NF001531">
    <property type="entry name" value="PRK00364.2-2"/>
    <property type="match status" value="1"/>
</dbReference>
<dbReference type="NCBIfam" id="NF001533">
    <property type="entry name" value="PRK00364.2-4"/>
    <property type="match status" value="1"/>
</dbReference>
<dbReference type="NCBIfam" id="NF001534">
    <property type="entry name" value="PRK00364.2-5"/>
    <property type="match status" value="1"/>
</dbReference>
<dbReference type="PANTHER" id="PTHR10772">
    <property type="entry name" value="10 KDA HEAT SHOCK PROTEIN"/>
    <property type="match status" value="1"/>
</dbReference>
<dbReference type="PANTHER" id="PTHR10772:SF58">
    <property type="entry name" value="CO-CHAPERONIN GROES"/>
    <property type="match status" value="1"/>
</dbReference>
<dbReference type="Pfam" id="PF00166">
    <property type="entry name" value="Cpn10"/>
    <property type="match status" value="1"/>
</dbReference>
<dbReference type="PRINTS" id="PR00297">
    <property type="entry name" value="CHAPERONIN10"/>
</dbReference>
<dbReference type="SMART" id="SM00883">
    <property type="entry name" value="Cpn10"/>
    <property type="match status" value="1"/>
</dbReference>
<dbReference type="SUPFAM" id="SSF50129">
    <property type="entry name" value="GroES-like"/>
    <property type="match status" value="1"/>
</dbReference>
<dbReference type="PROSITE" id="PS00681">
    <property type="entry name" value="CHAPERONINS_CPN10"/>
    <property type="match status" value="1"/>
</dbReference>
<comment type="function">
    <text evidence="1">Together with the chaperonin GroEL, plays an essential role in assisting protein folding. The GroEL-GroES system forms a nano-cage that allows encapsulation of the non-native substrate proteins and provides a physical environment optimized to promote and accelerate protein folding. GroES binds to the apical surface of the GroEL ring, thereby capping the opening of the GroEL channel.</text>
</comment>
<comment type="subunit">
    <text evidence="1">Heptamer of 7 subunits arranged in a ring. Interacts with the chaperonin GroEL.</text>
</comment>
<comment type="subcellular location">
    <subcellularLocation>
        <location evidence="1">Cytoplasm</location>
    </subcellularLocation>
</comment>
<comment type="similarity">
    <text evidence="1 2">Belongs to the GroES chaperonin family.</text>
</comment>
<keyword id="KW-0143">Chaperone</keyword>
<keyword id="KW-0963">Cytoplasm</keyword>
<protein>
    <recommendedName>
        <fullName evidence="1">Co-chaperonin GroES</fullName>
    </recommendedName>
    <alternativeName>
        <fullName evidence="1">10 kDa chaperonin</fullName>
    </alternativeName>
    <alternativeName>
        <fullName evidence="1">Chaperonin-10</fullName>
        <shortName evidence="1">Cpn10</shortName>
    </alternativeName>
</protein>
<sequence length="102" mass="10946">MTTTSSKVAIKPLEDRIVVQPLDAEQTTASGLVIPDTAKEKPQEGVVLAVGPGRFEDGNRLPLDVSVGDVVLYSKYGGTEVKYNGEEYLVLSARDVLAIVEK</sequence>
<organism>
    <name type="scientific">Streptomyces lividans</name>
    <dbReference type="NCBI Taxonomy" id="1916"/>
    <lineage>
        <taxon>Bacteria</taxon>
        <taxon>Bacillati</taxon>
        <taxon>Actinomycetota</taxon>
        <taxon>Actinomycetes</taxon>
        <taxon>Kitasatosporales</taxon>
        <taxon>Streptomycetaceae</taxon>
        <taxon>Streptomyces</taxon>
    </lineage>
</organism>
<name>CH10_STRLI</name>